<proteinExistence type="inferred from homology"/>
<reference key="1">
    <citation type="submission" date="2007-11" db="EMBL/GenBank/DDBJ databases">
        <title>Genome sequencing of phylogenetically and phenotypically diverse Coxiella burnetii isolates.</title>
        <authorList>
            <person name="Seshadri R."/>
            <person name="Samuel J.E."/>
        </authorList>
    </citation>
    <scope>NUCLEOTIDE SEQUENCE [LARGE SCALE GENOMIC DNA]</scope>
    <source>
        <strain>RSA 331 / Henzerling II</strain>
    </source>
</reference>
<accession>A9NBQ8</accession>
<sequence length="115" mass="13275">MNNIIQLLETEQTQGKEIPDFRAGDTVTVQVKVKEGNRERLQAFEGVVIARRHRGLNSSFTVRKVSHGEGVERVFQLYSPLIASIKVNRRGDVRRAKLYYLRNLRGRKAKIKEKI</sequence>
<gene>
    <name evidence="1" type="primary">rplS</name>
    <name type="ordered locus">COXBURSA331_A0549</name>
</gene>
<dbReference type="EMBL" id="CP000890">
    <property type="protein sequence ID" value="ABX78119.1"/>
    <property type="molecule type" value="Genomic_DNA"/>
</dbReference>
<dbReference type="RefSeq" id="WP_005771383.1">
    <property type="nucleotide sequence ID" value="NC_010117.1"/>
</dbReference>
<dbReference type="SMR" id="A9NBQ8"/>
<dbReference type="KEGG" id="cbs:COXBURSA331_A0549"/>
<dbReference type="HOGENOM" id="CLU_103507_2_1_6"/>
<dbReference type="GO" id="GO:0022625">
    <property type="term" value="C:cytosolic large ribosomal subunit"/>
    <property type="evidence" value="ECO:0007669"/>
    <property type="project" value="TreeGrafter"/>
</dbReference>
<dbReference type="GO" id="GO:0003735">
    <property type="term" value="F:structural constituent of ribosome"/>
    <property type="evidence" value="ECO:0007669"/>
    <property type="project" value="InterPro"/>
</dbReference>
<dbReference type="GO" id="GO:0006412">
    <property type="term" value="P:translation"/>
    <property type="evidence" value="ECO:0007669"/>
    <property type="project" value="UniProtKB-UniRule"/>
</dbReference>
<dbReference type="FunFam" id="2.30.30.790:FF:000001">
    <property type="entry name" value="50S ribosomal protein L19"/>
    <property type="match status" value="1"/>
</dbReference>
<dbReference type="Gene3D" id="2.30.30.790">
    <property type="match status" value="1"/>
</dbReference>
<dbReference type="HAMAP" id="MF_00402">
    <property type="entry name" value="Ribosomal_bL19"/>
    <property type="match status" value="1"/>
</dbReference>
<dbReference type="InterPro" id="IPR001857">
    <property type="entry name" value="Ribosomal_bL19"/>
</dbReference>
<dbReference type="InterPro" id="IPR018257">
    <property type="entry name" value="Ribosomal_bL19_CS"/>
</dbReference>
<dbReference type="InterPro" id="IPR038657">
    <property type="entry name" value="Ribosomal_bL19_sf"/>
</dbReference>
<dbReference type="InterPro" id="IPR008991">
    <property type="entry name" value="Translation_prot_SH3-like_sf"/>
</dbReference>
<dbReference type="NCBIfam" id="TIGR01024">
    <property type="entry name" value="rplS_bact"/>
    <property type="match status" value="1"/>
</dbReference>
<dbReference type="PANTHER" id="PTHR15680:SF9">
    <property type="entry name" value="LARGE RIBOSOMAL SUBUNIT PROTEIN BL19M"/>
    <property type="match status" value="1"/>
</dbReference>
<dbReference type="PANTHER" id="PTHR15680">
    <property type="entry name" value="RIBOSOMAL PROTEIN L19"/>
    <property type="match status" value="1"/>
</dbReference>
<dbReference type="Pfam" id="PF01245">
    <property type="entry name" value="Ribosomal_L19"/>
    <property type="match status" value="1"/>
</dbReference>
<dbReference type="PIRSF" id="PIRSF002191">
    <property type="entry name" value="Ribosomal_L19"/>
    <property type="match status" value="1"/>
</dbReference>
<dbReference type="PRINTS" id="PR00061">
    <property type="entry name" value="RIBOSOMALL19"/>
</dbReference>
<dbReference type="SUPFAM" id="SSF50104">
    <property type="entry name" value="Translation proteins SH3-like domain"/>
    <property type="match status" value="1"/>
</dbReference>
<dbReference type="PROSITE" id="PS01015">
    <property type="entry name" value="RIBOSOMAL_L19"/>
    <property type="match status" value="1"/>
</dbReference>
<keyword id="KW-0687">Ribonucleoprotein</keyword>
<keyword id="KW-0689">Ribosomal protein</keyword>
<evidence type="ECO:0000255" key="1">
    <source>
        <dbReference type="HAMAP-Rule" id="MF_00402"/>
    </source>
</evidence>
<evidence type="ECO:0000305" key="2"/>
<organism>
    <name type="scientific">Coxiella burnetii (strain RSA 331 / Henzerling II)</name>
    <dbReference type="NCBI Taxonomy" id="360115"/>
    <lineage>
        <taxon>Bacteria</taxon>
        <taxon>Pseudomonadati</taxon>
        <taxon>Pseudomonadota</taxon>
        <taxon>Gammaproteobacteria</taxon>
        <taxon>Legionellales</taxon>
        <taxon>Coxiellaceae</taxon>
        <taxon>Coxiella</taxon>
    </lineage>
</organism>
<name>RL19_COXBR</name>
<protein>
    <recommendedName>
        <fullName evidence="1">Large ribosomal subunit protein bL19</fullName>
    </recommendedName>
    <alternativeName>
        <fullName evidence="2">50S ribosomal protein L19</fullName>
    </alternativeName>
</protein>
<feature type="chain" id="PRO_1000080347" description="Large ribosomal subunit protein bL19">
    <location>
        <begin position="1"/>
        <end position="115"/>
    </location>
</feature>
<comment type="function">
    <text evidence="1">This protein is located at the 30S-50S ribosomal subunit interface and may play a role in the structure and function of the aminoacyl-tRNA binding site.</text>
</comment>
<comment type="similarity">
    <text evidence="1">Belongs to the bacterial ribosomal protein bL19 family.</text>
</comment>